<protein>
    <recommendedName>
        <fullName evidence="4">MFS-type transporter clz9</fullName>
    </recommendedName>
    <alternativeName>
        <fullName evidence="4">Squalestatin S1 biosynthesis cluster protein clz9</fullName>
    </alternativeName>
    <alternativeName>
        <fullName evidence="4">Zaragozic acid A biosynthesis cluster protein 9</fullName>
    </alternativeName>
</protein>
<accession>A0A345BJN8</accession>
<comment type="function">
    <text evidence="6">MFS-type transporter; part of the gene cluster that mediates the biosynthesis of squalestatin S1 (SQS1, also known as zaragozic acid A), a heavily oxidized fungal polyketide that offers potent cholesterol lowering activity by targeting squalene synthase (SS).</text>
</comment>
<comment type="subcellular location">
    <subcellularLocation>
        <location evidence="1">Membrane</location>
        <topology evidence="1">Multi-pass membrane protein</topology>
    </subcellularLocation>
</comment>
<comment type="similarity">
    <text evidence="5">Belongs to the major facilitator superfamily. CAR1 family.</text>
</comment>
<reference key="1">
    <citation type="journal article" date="2017" name="Org. Lett.">
        <title>Identification and heterologous production of a benzoyl-primed tricarboxylic acid polyketide intermediate from the zaragozic acid A biosynthetic pathway.</title>
        <authorList>
            <person name="Liu N."/>
            <person name="Hung Y.S."/>
            <person name="Gao S.S."/>
            <person name="Hang L."/>
            <person name="Zou Y."/>
            <person name="Chooi Y.H."/>
            <person name="Tang Y."/>
        </authorList>
    </citation>
    <scope>NUCLEOTIDE SEQUENCE [GENOMIC DNA]</scope>
    <scope>FUNCTION</scope>
    <source>
        <strain>ATCC 74067</strain>
    </source>
</reference>
<organism>
    <name type="scientific">Cochliobolus lunatus</name>
    <name type="common">Filamentous fungus</name>
    <name type="synonym">Curvularia lunata</name>
    <dbReference type="NCBI Taxonomy" id="5503"/>
    <lineage>
        <taxon>Eukaryota</taxon>
        <taxon>Fungi</taxon>
        <taxon>Dikarya</taxon>
        <taxon>Ascomycota</taxon>
        <taxon>Pezizomycotina</taxon>
        <taxon>Dothideomycetes</taxon>
        <taxon>Pleosporomycetidae</taxon>
        <taxon>Pleosporales</taxon>
        <taxon>Pleosporineae</taxon>
        <taxon>Pleosporaceae</taxon>
        <taxon>Curvularia</taxon>
    </lineage>
</organism>
<dbReference type="EMBL" id="MF806533">
    <property type="protein sequence ID" value="AXF50651.1"/>
    <property type="molecule type" value="Genomic_DNA"/>
</dbReference>
<dbReference type="GlyCosmos" id="A0A345BJN8">
    <property type="glycosylation" value="4 sites, No reported glycans"/>
</dbReference>
<dbReference type="GO" id="GO:0005886">
    <property type="term" value="C:plasma membrane"/>
    <property type="evidence" value="ECO:0007669"/>
    <property type="project" value="TreeGrafter"/>
</dbReference>
<dbReference type="GO" id="GO:0003676">
    <property type="term" value="F:nucleic acid binding"/>
    <property type="evidence" value="ECO:0007669"/>
    <property type="project" value="InterPro"/>
</dbReference>
<dbReference type="GO" id="GO:0022857">
    <property type="term" value="F:transmembrane transporter activity"/>
    <property type="evidence" value="ECO:0007669"/>
    <property type="project" value="InterPro"/>
</dbReference>
<dbReference type="FunFam" id="1.20.1250.20:FF:000172">
    <property type="entry name" value="MFS multidrug resistance transporter"/>
    <property type="match status" value="1"/>
</dbReference>
<dbReference type="FunFam" id="1.20.1720.10:FF:000009">
    <property type="entry name" value="MFS multidrug transporter"/>
    <property type="match status" value="1"/>
</dbReference>
<dbReference type="Gene3D" id="1.20.1250.20">
    <property type="entry name" value="MFS general substrate transporter like domains"/>
    <property type="match status" value="1"/>
</dbReference>
<dbReference type="Gene3D" id="3.30.420.10">
    <property type="entry name" value="Ribonuclease H-like superfamily/Ribonuclease H"/>
    <property type="match status" value="1"/>
</dbReference>
<dbReference type="InterPro" id="IPR004875">
    <property type="entry name" value="DDE_SF_endonuclease_dom"/>
</dbReference>
<dbReference type="InterPro" id="IPR011701">
    <property type="entry name" value="MFS"/>
</dbReference>
<dbReference type="InterPro" id="IPR020846">
    <property type="entry name" value="MFS_dom"/>
</dbReference>
<dbReference type="InterPro" id="IPR036259">
    <property type="entry name" value="MFS_trans_sf"/>
</dbReference>
<dbReference type="InterPro" id="IPR036397">
    <property type="entry name" value="RNaseH_sf"/>
</dbReference>
<dbReference type="PANTHER" id="PTHR23502">
    <property type="entry name" value="MAJOR FACILITATOR SUPERFAMILY"/>
    <property type="match status" value="1"/>
</dbReference>
<dbReference type="PANTHER" id="PTHR23502:SF51">
    <property type="entry name" value="QUINIDINE RESISTANCE PROTEIN 1-RELATED"/>
    <property type="match status" value="1"/>
</dbReference>
<dbReference type="Pfam" id="PF03184">
    <property type="entry name" value="DDE_1"/>
    <property type="match status" value="1"/>
</dbReference>
<dbReference type="Pfam" id="PF07690">
    <property type="entry name" value="MFS_1"/>
    <property type="match status" value="1"/>
</dbReference>
<dbReference type="SUPFAM" id="SSF103473">
    <property type="entry name" value="MFS general substrate transporter"/>
    <property type="match status" value="1"/>
</dbReference>
<dbReference type="PROSITE" id="PS50850">
    <property type="entry name" value="MFS"/>
    <property type="match status" value="1"/>
</dbReference>
<evidence type="ECO:0000255" key="1"/>
<evidence type="ECO:0000255" key="2">
    <source>
        <dbReference type="PROSITE-ProRule" id="PRU00498"/>
    </source>
</evidence>
<evidence type="ECO:0000256" key="3">
    <source>
        <dbReference type="SAM" id="MobiDB-lite"/>
    </source>
</evidence>
<evidence type="ECO:0000303" key="4">
    <source>
    </source>
</evidence>
<evidence type="ECO:0000305" key="5"/>
<evidence type="ECO:0000305" key="6">
    <source>
    </source>
</evidence>
<proteinExistence type="inferred from homology"/>
<name>CLZ9_COCLU</name>
<keyword id="KW-0325">Glycoprotein</keyword>
<keyword id="KW-0472">Membrane</keyword>
<keyword id="KW-0812">Transmembrane</keyword>
<keyword id="KW-1133">Transmembrane helix</keyword>
<keyword id="KW-0813">Transport</keyword>
<sequence>MAASTKPTTKLSTEEDDVSRRDSESSADFMKSNEELQATMIPEDDGANPATGQPTWTILSDTEIKSVLVVASFAAAISPFSTSTYYPVVTAIARDLGVSVSKINLTMSSYQIFQGVAPTITAAFADTYGRRPMFLVCFVTYFVANVGLALQNDFTTLLVLRCLQSTGSSGTFALAQAVTADITTRAERGRYLIYATLGSTLGPFIGPVIGGLLVKFLGWRSVFWFLLCMGTVFALLIFIFFGETARPIVGDGSIPPQSWNRSYLQMRSKGVSNLKPNLASLERRKSRPNPLTSLALLWDRENFILSVSGGLLYAGYSSVTSVLASQLQQRYKYDAVQVGLCYLPVGFGSLLAYRTTVRLMDWNFEREAKKQGLVIVKNRQTDISRFDLEKARLGFVFPMILVCSGLLVAYGWQMHYHAPLAPILVTMFLIAIILTGVMNAIAALLTDVNRENAAAVGAAMNLTRLLLGAGAVAVVGPLNKSAGIGWTATVTAGFSYNVNTKGIQTKRRAAAIFEVSRATLHRRCDGKRARRDCQPNSKKLIQQEEEVILKYILDLDTRGFLPTYAAERGMADKLLSTRGGSPVGRDWPRNFVKHKAKYSILDEDVYSFDEAGFMMGKITTQLAVTGSERRGRPKAIQPENREWVTLIQGINAAGWAISPFVVFAGQHHLSAWYEEDIPRDWAIAVSDNGWTTNEIGVEWLEHFIKYTDGKAVGVRRLLIFDGHESHHSLKSRELCKENNIYTLYMPPHSSHLLQPLDIGCFSPLKRAYSREIEALICHHINHITKLEFLPAFKAAFQRSFTSANICSSFRGAGLVPLQPDIVLSKLDVRLLTHIPAASPEAPWEAKTPSNRKKKQIQKRGTLTKGEGEDTLAQKEADQQIEREQRQGGEQSGRSRQALARSLEALEVGGVAHSLNGSFV</sequence>
<gene>
    <name evidence="4" type="primary">clz9</name>
</gene>
<feature type="chain" id="PRO_0000452628" description="MFS-type transporter clz9">
    <location>
        <begin position="1"/>
        <end position="919"/>
    </location>
</feature>
<feature type="transmembrane region" description="Helical" evidence="1">
    <location>
        <begin position="69"/>
        <end position="89"/>
    </location>
</feature>
<feature type="transmembrane region" description="Helical" evidence="1">
    <location>
        <begin position="132"/>
        <end position="152"/>
    </location>
</feature>
<feature type="transmembrane region" description="Helical" evidence="1">
    <location>
        <begin position="192"/>
        <end position="212"/>
    </location>
</feature>
<feature type="transmembrane region" description="Helical" evidence="1">
    <location>
        <begin position="222"/>
        <end position="242"/>
    </location>
</feature>
<feature type="transmembrane region" description="Helical" evidence="1">
    <location>
        <begin position="303"/>
        <end position="323"/>
    </location>
</feature>
<feature type="transmembrane region" description="Helical" evidence="1">
    <location>
        <begin position="333"/>
        <end position="353"/>
    </location>
</feature>
<feature type="transmembrane region" description="Helical" evidence="1">
    <location>
        <begin position="393"/>
        <end position="413"/>
    </location>
</feature>
<feature type="transmembrane region" description="Helical" evidence="1">
    <location>
        <begin position="418"/>
        <end position="438"/>
    </location>
</feature>
<feature type="transmembrane region" description="Helical" evidence="1">
    <location>
        <begin position="465"/>
        <end position="485"/>
    </location>
</feature>
<feature type="domain" description="DDE-1" evidence="1">
    <location>
        <begin position="641"/>
        <end position="809"/>
    </location>
</feature>
<feature type="region of interest" description="Disordered" evidence="3">
    <location>
        <begin position="1"/>
        <end position="33"/>
    </location>
</feature>
<feature type="region of interest" description="Disordered" evidence="3">
    <location>
        <begin position="840"/>
        <end position="897"/>
    </location>
</feature>
<feature type="compositionally biased region" description="Polar residues" evidence="3">
    <location>
        <begin position="1"/>
        <end position="11"/>
    </location>
</feature>
<feature type="compositionally biased region" description="Basic and acidic residues" evidence="3">
    <location>
        <begin position="865"/>
        <end position="886"/>
    </location>
</feature>
<feature type="compositionally biased region" description="Low complexity" evidence="3">
    <location>
        <begin position="887"/>
        <end position="896"/>
    </location>
</feature>
<feature type="glycosylation site" description="N-linked (GlcNAc...) asparagine" evidence="2">
    <location>
        <position position="104"/>
    </location>
</feature>
<feature type="glycosylation site" description="N-linked (GlcNAc...) asparagine" evidence="2">
    <location>
        <position position="260"/>
    </location>
</feature>
<feature type="glycosylation site" description="N-linked (GlcNAc...) asparagine" evidence="2">
    <location>
        <position position="461"/>
    </location>
</feature>
<feature type="glycosylation site" description="N-linked (GlcNAc...) asparagine" evidence="2">
    <location>
        <position position="915"/>
    </location>
</feature>